<keyword id="KW-0274">FAD</keyword>
<keyword id="KW-0285">Flavoprotein</keyword>
<keyword id="KW-0520">NAD</keyword>
<keyword id="KW-0560">Oxidoreductase</keyword>
<accession>B2HV79</accession>
<proteinExistence type="inferred from homology"/>
<evidence type="ECO:0000255" key="1">
    <source>
        <dbReference type="HAMAP-Rule" id="MF_00750"/>
    </source>
</evidence>
<reference key="1">
    <citation type="journal article" date="2008" name="Antimicrob. Agents Chemother.">
        <title>Whole-genome pyrosequencing of an epidemic multidrug-resistant Acinetobacter baumannii strain belonging to the European clone II group.</title>
        <authorList>
            <person name="Iacono M."/>
            <person name="Villa L."/>
            <person name="Fortini D."/>
            <person name="Bordoni R."/>
            <person name="Imperi F."/>
            <person name="Bonnal R.J."/>
            <person name="Sicheritz-Ponten T."/>
            <person name="De Bellis G."/>
            <person name="Visca P."/>
            <person name="Cassone A."/>
            <person name="Carattoli A."/>
        </authorList>
    </citation>
    <scope>NUCLEOTIDE SEQUENCE [LARGE SCALE GENOMIC DNA]</scope>
    <source>
        <strain>ACICU</strain>
    </source>
</reference>
<organism>
    <name type="scientific">Acinetobacter baumannii (strain ACICU)</name>
    <dbReference type="NCBI Taxonomy" id="405416"/>
    <lineage>
        <taxon>Bacteria</taxon>
        <taxon>Pseudomonadati</taxon>
        <taxon>Pseudomonadota</taxon>
        <taxon>Gammaproteobacteria</taxon>
        <taxon>Moraxellales</taxon>
        <taxon>Moraxellaceae</taxon>
        <taxon>Acinetobacter</taxon>
        <taxon>Acinetobacter calcoaceticus/baumannii complex</taxon>
    </lineage>
</organism>
<dbReference type="EC" id="1.1.99.1" evidence="1"/>
<dbReference type="EC" id="1.2.1.8" evidence="1"/>
<dbReference type="EMBL" id="CP000863">
    <property type="protein sequence ID" value="ACC56200.1"/>
    <property type="molecule type" value="Genomic_DNA"/>
</dbReference>
<dbReference type="RefSeq" id="WP_001021934.1">
    <property type="nucleotide sequence ID" value="NZ_CP031380.1"/>
</dbReference>
<dbReference type="SMR" id="B2HV79"/>
<dbReference type="CAZy" id="AA3">
    <property type="family name" value="Auxiliary Activities 3"/>
</dbReference>
<dbReference type="GeneID" id="92892889"/>
<dbReference type="KEGG" id="abc:ACICU_00888"/>
<dbReference type="HOGENOM" id="CLU_002865_7_1_6"/>
<dbReference type="UniPathway" id="UPA00529">
    <property type="reaction ID" value="UER00385"/>
</dbReference>
<dbReference type="Proteomes" id="UP000008839">
    <property type="component" value="Chromosome"/>
</dbReference>
<dbReference type="GO" id="GO:0016020">
    <property type="term" value="C:membrane"/>
    <property type="evidence" value="ECO:0007669"/>
    <property type="project" value="TreeGrafter"/>
</dbReference>
<dbReference type="GO" id="GO:0008802">
    <property type="term" value="F:betaine-aldehyde dehydrogenase (NAD+) activity"/>
    <property type="evidence" value="ECO:0007669"/>
    <property type="project" value="UniProtKB-EC"/>
</dbReference>
<dbReference type="GO" id="GO:0008812">
    <property type="term" value="F:choline dehydrogenase activity"/>
    <property type="evidence" value="ECO:0007669"/>
    <property type="project" value="UniProtKB-UniRule"/>
</dbReference>
<dbReference type="GO" id="GO:0050660">
    <property type="term" value="F:flavin adenine dinucleotide binding"/>
    <property type="evidence" value="ECO:0007669"/>
    <property type="project" value="InterPro"/>
</dbReference>
<dbReference type="GO" id="GO:0019285">
    <property type="term" value="P:glycine betaine biosynthetic process from choline"/>
    <property type="evidence" value="ECO:0007669"/>
    <property type="project" value="UniProtKB-UniRule"/>
</dbReference>
<dbReference type="Gene3D" id="3.50.50.60">
    <property type="entry name" value="FAD/NAD(P)-binding domain"/>
    <property type="match status" value="1"/>
</dbReference>
<dbReference type="Gene3D" id="3.30.560.10">
    <property type="entry name" value="Glucose Oxidase, domain 3"/>
    <property type="match status" value="1"/>
</dbReference>
<dbReference type="HAMAP" id="MF_00750">
    <property type="entry name" value="Choline_dehydrogen"/>
    <property type="match status" value="1"/>
</dbReference>
<dbReference type="InterPro" id="IPR011533">
    <property type="entry name" value="BetA"/>
</dbReference>
<dbReference type="InterPro" id="IPR036188">
    <property type="entry name" value="FAD/NAD-bd_sf"/>
</dbReference>
<dbReference type="InterPro" id="IPR012132">
    <property type="entry name" value="GMC_OxRdtase"/>
</dbReference>
<dbReference type="InterPro" id="IPR000172">
    <property type="entry name" value="GMC_OxRdtase_N"/>
</dbReference>
<dbReference type="InterPro" id="IPR007867">
    <property type="entry name" value="GMC_OxRtase_C"/>
</dbReference>
<dbReference type="NCBIfam" id="TIGR01810">
    <property type="entry name" value="betA"/>
    <property type="match status" value="1"/>
</dbReference>
<dbReference type="NCBIfam" id="NF002550">
    <property type="entry name" value="PRK02106.1"/>
    <property type="match status" value="1"/>
</dbReference>
<dbReference type="PANTHER" id="PTHR11552:SF147">
    <property type="entry name" value="CHOLINE DEHYDROGENASE, MITOCHONDRIAL"/>
    <property type="match status" value="1"/>
</dbReference>
<dbReference type="PANTHER" id="PTHR11552">
    <property type="entry name" value="GLUCOSE-METHANOL-CHOLINE GMC OXIDOREDUCTASE"/>
    <property type="match status" value="1"/>
</dbReference>
<dbReference type="Pfam" id="PF05199">
    <property type="entry name" value="GMC_oxred_C"/>
    <property type="match status" value="1"/>
</dbReference>
<dbReference type="Pfam" id="PF00732">
    <property type="entry name" value="GMC_oxred_N"/>
    <property type="match status" value="1"/>
</dbReference>
<dbReference type="PIRSF" id="PIRSF000137">
    <property type="entry name" value="Alcohol_oxidase"/>
    <property type="match status" value="1"/>
</dbReference>
<dbReference type="SUPFAM" id="SSF54373">
    <property type="entry name" value="FAD-linked reductases, C-terminal domain"/>
    <property type="match status" value="1"/>
</dbReference>
<dbReference type="SUPFAM" id="SSF51905">
    <property type="entry name" value="FAD/NAD(P)-binding domain"/>
    <property type="match status" value="1"/>
</dbReference>
<dbReference type="PROSITE" id="PS00623">
    <property type="entry name" value="GMC_OXRED_1"/>
    <property type="match status" value="1"/>
</dbReference>
<dbReference type="PROSITE" id="PS00624">
    <property type="entry name" value="GMC_OXRED_2"/>
    <property type="match status" value="1"/>
</dbReference>
<protein>
    <recommendedName>
        <fullName evidence="1">Oxygen-dependent choline dehydrogenase</fullName>
        <shortName evidence="1">CDH</shortName>
        <shortName evidence="1">CHD</shortName>
        <ecNumber evidence="1">1.1.99.1</ecNumber>
    </recommendedName>
    <alternativeName>
        <fullName evidence="1">Betaine aldehyde dehydrogenase</fullName>
        <shortName evidence="1">BADH</shortName>
        <ecNumber evidence="1">1.2.1.8</ecNumber>
    </alternativeName>
</protein>
<gene>
    <name evidence="1" type="primary">betA</name>
    <name type="ordered locus">ACICU_00888</name>
</gene>
<comment type="function">
    <text evidence="1">Involved in the biosynthesis of the osmoprotectant glycine betaine. Catalyzes the oxidation of choline to betaine aldehyde and betaine aldehyde to glycine betaine at the same rate.</text>
</comment>
<comment type="catalytic activity">
    <reaction evidence="1">
        <text>choline + A = betaine aldehyde + AH2</text>
        <dbReference type="Rhea" id="RHEA:17433"/>
        <dbReference type="ChEBI" id="CHEBI:13193"/>
        <dbReference type="ChEBI" id="CHEBI:15354"/>
        <dbReference type="ChEBI" id="CHEBI:15710"/>
        <dbReference type="ChEBI" id="CHEBI:17499"/>
        <dbReference type="EC" id="1.1.99.1"/>
    </reaction>
</comment>
<comment type="catalytic activity">
    <reaction evidence="1">
        <text>betaine aldehyde + NAD(+) + H2O = glycine betaine + NADH + 2 H(+)</text>
        <dbReference type="Rhea" id="RHEA:15305"/>
        <dbReference type="ChEBI" id="CHEBI:15377"/>
        <dbReference type="ChEBI" id="CHEBI:15378"/>
        <dbReference type="ChEBI" id="CHEBI:15710"/>
        <dbReference type="ChEBI" id="CHEBI:17750"/>
        <dbReference type="ChEBI" id="CHEBI:57540"/>
        <dbReference type="ChEBI" id="CHEBI:57945"/>
        <dbReference type="EC" id="1.2.1.8"/>
    </reaction>
</comment>
<comment type="cofactor">
    <cofactor evidence="1">
        <name>FAD</name>
        <dbReference type="ChEBI" id="CHEBI:57692"/>
    </cofactor>
</comment>
<comment type="pathway">
    <text evidence="1">Amine and polyamine biosynthesis; betaine biosynthesis via choline pathway; betaine aldehyde from choline (cytochrome c reductase route): step 1/1.</text>
</comment>
<comment type="similarity">
    <text evidence="1">Belongs to the GMC oxidoreductase family.</text>
</comment>
<sequence>MNIKEYDYIIIGAGSAGNVLAARLTEDKDTTVLLLEAGGPDYRLDFRTQMPAALAYPLQGRRYNWAYLTDPEPHMNNRRMECGRGKGLGGSSLINGMCYIRGNAMDLEQWATHKGLENWTYADCLPYYKKAETRDIGGNDYHGDSGPVSVATPKNGNNVLFHAMVEAGVQAGYPRTDDLNGYQQEGFGPMDRTVTPKGRRSSTARGYLDMAKGRPNLTILTHATTNKILFNQKQAIGVEYIIGADQNNLQRALVKREVLLCAGAIASPQILQRSGVGQSTFLKSMDIDVVHDLPGVGENLQDHLEMYLQYKCKQPVSLYPALKWYNQPAIGAEWLFNGTGIGASNQFEAGGFIRSSDEFKWPNIQYHFLPVAINYNGSNAVKEHGFQAHVGSMRSPSRGRIKLKSKDPFAHPSILFNYMSTEQDWREFRDAIRITREIMHQPALDPYRGDEISPGKHLQTDAELDDFVRNHAETAYHPSCSCKMGEDEMAVVDGQGRVHGMNGLRVVDASIMPLIITGNLNATTIMIAEKIADQIRGREALPRSTAPFYVAS</sequence>
<feature type="chain" id="PRO_1000133317" description="Oxygen-dependent choline dehydrogenase">
    <location>
        <begin position="1"/>
        <end position="552"/>
    </location>
</feature>
<feature type="active site" description="Proton acceptor" evidence="1">
    <location>
        <position position="477"/>
    </location>
</feature>
<feature type="binding site" evidence="1">
    <location>
        <begin position="7"/>
        <end position="36"/>
    </location>
    <ligand>
        <name>FAD</name>
        <dbReference type="ChEBI" id="CHEBI:57692"/>
    </ligand>
</feature>
<name>BETA_ACIBC</name>